<reference key="1">
    <citation type="journal article" date="2005" name="Genome Res.">
        <title>Complete genome sequence of the hyperthermophilic archaeon Thermococcus kodakaraensis KOD1 and comparison with Pyrococcus genomes.</title>
        <authorList>
            <person name="Fukui T."/>
            <person name="Atomi H."/>
            <person name="Kanai T."/>
            <person name="Matsumi R."/>
            <person name="Fujiwara S."/>
            <person name="Imanaka T."/>
        </authorList>
    </citation>
    <scope>NUCLEOTIDE SEQUENCE [LARGE SCALE GENOMIC DNA]</scope>
    <source>
        <strain>ATCC BAA-918 / JCM 12380 / KOD1</strain>
    </source>
</reference>
<accession>Q5JCY1</accession>
<gene>
    <name evidence="1" type="primary">thiI</name>
    <name type="ordered locus">TK0368</name>
</gene>
<name>THII_THEKO</name>
<sequence length="381" mass="43670">MFNVVIVRYGEIGTKSRQTRRWFENILMNNIREALVSEGIDFKKVEAKHGRVLVRTNRAREATEVLTRVFGIVSLSPAMEVDAELEKINKTALKLFRKKKRELNLEKPKFRVTARRITKEFPLKSPEIQAKVGEYILENEESEVNLHEYDIEVGVELMEGKAYIFVDKIRAWGGLPIGTQGKVVALLSGGIDSPVAAFLMMKRGVEVIPVHIYMGEKTLEKVRKIWNQLKKYHYGGKAELIVVKPQNREEMLKKIKELGKEKYTCVLCKFMMVKHADRIAKEFGAKGIVMGDSLGQVASQTLENMYIVSQASDLPIYRPLIGLDKEEIVDIAKKIGTFELSTLPEDEIPFIPKHPVIRGSWEEFRKIYMAIFGEEPRKRDC</sequence>
<comment type="function">
    <text evidence="1">Catalyzes the ATP-dependent transfer of a sulfur to tRNA to produce 4-thiouridine in position 8 of tRNAs, which functions as a near-UV photosensor. Also catalyzes the transfer of sulfur to the sulfur carrier protein ThiS, forming ThiS-thiocarboxylate. This is a step in the synthesis of thiazole, in the thiamine biosynthesis pathway. The sulfur is donated as persulfide by IscS.</text>
</comment>
<comment type="catalytic activity">
    <reaction evidence="1">
        <text>[ThiI sulfur-carrier protein]-S-sulfanyl-L-cysteine + a uridine in tRNA + 2 reduced [2Fe-2S]-[ferredoxin] + ATP + H(+) = [ThiI sulfur-carrier protein]-L-cysteine + a 4-thiouridine in tRNA + 2 oxidized [2Fe-2S]-[ferredoxin] + AMP + diphosphate</text>
        <dbReference type="Rhea" id="RHEA:24176"/>
        <dbReference type="Rhea" id="RHEA-COMP:10000"/>
        <dbReference type="Rhea" id="RHEA-COMP:10001"/>
        <dbReference type="Rhea" id="RHEA-COMP:13337"/>
        <dbReference type="Rhea" id="RHEA-COMP:13338"/>
        <dbReference type="Rhea" id="RHEA-COMP:13339"/>
        <dbReference type="Rhea" id="RHEA-COMP:13340"/>
        <dbReference type="ChEBI" id="CHEBI:15378"/>
        <dbReference type="ChEBI" id="CHEBI:29950"/>
        <dbReference type="ChEBI" id="CHEBI:30616"/>
        <dbReference type="ChEBI" id="CHEBI:33019"/>
        <dbReference type="ChEBI" id="CHEBI:33737"/>
        <dbReference type="ChEBI" id="CHEBI:33738"/>
        <dbReference type="ChEBI" id="CHEBI:61963"/>
        <dbReference type="ChEBI" id="CHEBI:65315"/>
        <dbReference type="ChEBI" id="CHEBI:136798"/>
        <dbReference type="ChEBI" id="CHEBI:456215"/>
        <dbReference type="EC" id="2.8.1.4"/>
    </reaction>
</comment>
<comment type="catalytic activity">
    <reaction evidence="1">
        <text>[ThiS sulfur-carrier protein]-C-terminal Gly-Gly-AMP + S-sulfanyl-L-cysteinyl-[cysteine desulfurase] + AH2 = [ThiS sulfur-carrier protein]-C-terminal-Gly-aminoethanethioate + L-cysteinyl-[cysteine desulfurase] + A + AMP + 2 H(+)</text>
        <dbReference type="Rhea" id="RHEA:43340"/>
        <dbReference type="Rhea" id="RHEA-COMP:12157"/>
        <dbReference type="Rhea" id="RHEA-COMP:12158"/>
        <dbReference type="Rhea" id="RHEA-COMP:12910"/>
        <dbReference type="Rhea" id="RHEA-COMP:19908"/>
        <dbReference type="ChEBI" id="CHEBI:13193"/>
        <dbReference type="ChEBI" id="CHEBI:15378"/>
        <dbReference type="ChEBI" id="CHEBI:17499"/>
        <dbReference type="ChEBI" id="CHEBI:29950"/>
        <dbReference type="ChEBI" id="CHEBI:61963"/>
        <dbReference type="ChEBI" id="CHEBI:90618"/>
        <dbReference type="ChEBI" id="CHEBI:232372"/>
        <dbReference type="ChEBI" id="CHEBI:456215"/>
    </reaction>
</comment>
<comment type="pathway">
    <text evidence="1">Cofactor biosynthesis; thiamine diphosphate biosynthesis.</text>
</comment>
<comment type="subcellular location">
    <subcellularLocation>
        <location evidence="1">Cytoplasm</location>
    </subcellularLocation>
</comment>
<comment type="similarity">
    <text evidence="1">Belongs to the ThiI family.</text>
</comment>
<dbReference type="EC" id="2.8.1.4" evidence="1"/>
<dbReference type="EMBL" id="AP006878">
    <property type="protein sequence ID" value="BAD84557.1"/>
    <property type="molecule type" value="Genomic_DNA"/>
</dbReference>
<dbReference type="RefSeq" id="WP_011249323.1">
    <property type="nucleotide sequence ID" value="NC_006624.1"/>
</dbReference>
<dbReference type="SMR" id="Q5JCY1"/>
<dbReference type="FunCoup" id="Q5JCY1">
    <property type="interactions" value="54"/>
</dbReference>
<dbReference type="STRING" id="69014.TK0368"/>
<dbReference type="EnsemblBacteria" id="BAD84557">
    <property type="protein sequence ID" value="BAD84557"/>
    <property type="gene ID" value="TK0368"/>
</dbReference>
<dbReference type="GeneID" id="78446874"/>
<dbReference type="KEGG" id="tko:TK0368"/>
<dbReference type="PATRIC" id="fig|69014.16.peg.365"/>
<dbReference type="eggNOG" id="arCOG00038">
    <property type="taxonomic scope" value="Archaea"/>
</dbReference>
<dbReference type="HOGENOM" id="CLU_037952_4_0_2"/>
<dbReference type="InParanoid" id="Q5JCY1"/>
<dbReference type="OrthoDB" id="372227at2157"/>
<dbReference type="PhylomeDB" id="Q5JCY1"/>
<dbReference type="UniPathway" id="UPA00060"/>
<dbReference type="Proteomes" id="UP000000536">
    <property type="component" value="Chromosome"/>
</dbReference>
<dbReference type="GO" id="GO:0005829">
    <property type="term" value="C:cytosol"/>
    <property type="evidence" value="ECO:0000318"/>
    <property type="project" value="GO_Central"/>
</dbReference>
<dbReference type="GO" id="GO:0005524">
    <property type="term" value="F:ATP binding"/>
    <property type="evidence" value="ECO:0007669"/>
    <property type="project" value="UniProtKB-UniRule"/>
</dbReference>
<dbReference type="GO" id="GO:0004810">
    <property type="term" value="F:CCA tRNA nucleotidyltransferase activity"/>
    <property type="evidence" value="ECO:0007669"/>
    <property type="project" value="InterPro"/>
</dbReference>
<dbReference type="GO" id="GO:0000049">
    <property type="term" value="F:tRNA binding"/>
    <property type="evidence" value="ECO:0007669"/>
    <property type="project" value="UniProtKB-UniRule"/>
</dbReference>
<dbReference type="GO" id="GO:0140741">
    <property type="term" value="F:tRNA-uracil-4 sulfurtransferase activity"/>
    <property type="evidence" value="ECO:0007669"/>
    <property type="project" value="UniProtKB-EC"/>
</dbReference>
<dbReference type="GO" id="GO:0009228">
    <property type="term" value="P:thiamine biosynthetic process"/>
    <property type="evidence" value="ECO:0007669"/>
    <property type="project" value="UniProtKB-KW"/>
</dbReference>
<dbReference type="GO" id="GO:0009229">
    <property type="term" value="P:thiamine diphosphate biosynthetic process"/>
    <property type="evidence" value="ECO:0007669"/>
    <property type="project" value="UniProtKB-UniRule"/>
</dbReference>
<dbReference type="GO" id="GO:0052837">
    <property type="term" value="P:thiazole biosynthetic process"/>
    <property type="evidence" value="ECO:0000318"/>
    <property type="project" value="GO_Central"/>
</dbReference>
<dbReference type="GO" id="GO:0002937">
    <property type="term" value="P:tRNA 4-thiouridine biosynthesis"/>
    <property type="evidence" value="ECO:0000318"/>
    <property type="project" value="GO_Central"/>
</dbReference>
<dbReference type="CDD" id="cd01712">
    <property type="entry name" value="PPase_ThiI"/>
    <property type="match status" value="1"/>
</dbReference>
<dbReference type="CDD" id="cd11716">
    <property type="entry name" value="THUMP_ThiI"/>
    <property type="match status" value="1"/>
</dbReference>
<dbReference type="FunFam" id="3.30.70.1510:FF:000001">
    <property type="entry name" value="Probable tRNA sulfurtransferase"/>
    <property type="match status" value="1"/>
</dbReference>
<dbReference type="FunFam" id="3.40.50.620:FF:000053">
    <property type="entry name" value="Probable tRNA sulfurtransferase"/>
    <property type="match status" value="1"/>
</dbReference>
<dbReference type="Gene3D" id="3.40.50.620">
    <property type="entry name" value="HUPs"/>
    <property type="match status" value="1"/>
</dbReference>
<dbReference type="Gene3D" id="3.30.70.1510">
    <property type="entry name" value="THUMP domain-like"/>
    <property type="match status" value="1"/>
</dbReference>
<dbReference type="Gene3D" id="3.30.2300.10">
    <property type="entry name" value="THUMP superfamily"/>
    <property type="match status" value="1"/>
</dbReference>
<dbReference type="HAMAP" id="MF_00021">
    <property type="entry name" value="ThiI"/>
    <property type="match status" value="1"/>
</dbReference>
<dbReference type="InterPro" id="IPR014729">
    <property type="entry name" value="Rossmann-like_a/b/a_fold"/>
</dbReference>
<dbReference type="InterPro" id="IPR020536">
    <property type="entry name" value="ThiI_AANH"/>
</dbReference>
<dbReference type="InterPro" id="IPR054173">
    <property type="entry name" value="ThiI_fer"/>
</dbReference>
<dbReference type="InterPro" id="IPR049961">
    <property type="entry name" value="ThiI_N"/>
</dbReference>
<dbReference type="InterPro" id="IPR004114">
    <property type="entry name" value="THUMP_dom"/>
</dbReference>
<dbReference type="InterPro" id="IPR049962">
    <property type="entry name" value="THUMP_ThiI"/>
</dbReference>
<dbReference type="InterPro" id="IPR003720">
    <property type="entry name" value="tRNA_STrfase"/>
</dbReference>
<dbReference type="InterPro" id="IPR050102">
    <property type="entry name" value="tRNA_sulfurtransferase_ThiI"/>
</dbReference>
<dbReference type="NCBIfam" id="NF006222">
    <property type="entry name" value="PRK08349.1"/>
    <property type="match status" value="1"/>
</dbReference>
<dbReference type="NCBIfam" id="TIGR00342">
    <property type="entry name" value="tRNA uracil 4-sulfurtransferase ThiI"/>
    <property type="match status" value="1"/>
</dbReference>
<dbReference type="PANTHER" id="PTHR43209">
    <property type="entry name" value="TRNA SULFURTRANSFERASE"/>
    <property type="match status" value="1"/>
</dbReference>
<dbReference type="PANTHER" id="PTHR43209:SF1">
    <property type="entry name" value="TRNA SULFURTRANSFERASE"/>
    <property type="match status" value="1"/>
</dbReference>
<dbReference type="Pfam" id="PF02568">
    <property type="entry name" value="ThiI"/>
    <property type="match status" value="1"/>
</dbReference>
<dbReference type="Pfam" id="PF22025">
    <property type="entry name" value="ThiI_fer"/>
    <property type="match status" value="1"/>
</dbReference>
<dbReference type="Pfam" id="PF02926">
    <property type="entry name" value="THUMP"/>
    <property type="match status" value="1"/>
</dbReference>
<dbReference type="SMART" id="SM00981">
    <property type="entry name" value="THUMP"/>
    <property type="match status" value="1"/>
</dbReference>
<dbReference type="SUPFAM" id="SSF52402">
    <property type="entry name" value="Adenine nucleotide alpha hydrolases-like"/>
    <property type="match status" value="1"/>
</dbReference>
<dbReference type="SUPFAM" id="SSF143437">
    <property type="entry name" value="THUMP domain-like"/>
    <property type="match status" value="1"/>
</dbReference>
<dbReference type="PROSITE" id="PS51165">
    <property type="entry name" value="THUMP"/>
    <property type="match status" value="1"/>
</dbReference>
<proteinExistence type="inferred from homology"/>
<keyword id="KW-0067">ATP-binding</keyword>
<keyword id="KW-0963">Cytoplasm</keyword>
<keyword id="KW-0547">Nucleotide-binding</keyword>
<keyword id="KW-1185">Reference proteome</keyword>
<keyword id="KW-0694">RNA-binding</keyword>
<keyword id="KW-0784">Thiamine biosynthesis</keyword>
<keyword id="KW-0808">Transferase</keyword>
<keyword id="KW-0820">tRNA-binding</keyword>
<protein>
    <recommendedName>
        <fullName evidence="1">Probable tRNA sulfurtransferase</fullName>
        <ecNumber evidence="1">2.8.1.4</ecNumber>
    </recommendedName>
    <alternativeName>
        <fullName evidence="1">Sulfur carrier protein ThiS sulfurtransferase</fullName>
    </alternativeName>
    <alternativeName>
        <fullName evidence="1">Thiamine biosynthesis protein ThiI</fullName>
    </alternativeName>
    <alternativeName>
        <fullName evidence="1">tRNA 4-thiouridine synthase</fullName>
    </alternativeName>
</protein>
<evidence type="ECO:0000255" key="1">
    <source>
        <dbReference type="HAMAP-Rule" id="MF_00021"/>
    </source>
</evidence>
<feature type="chain" id="PRO_0000154898" description="Probable tRNA sulfurtransferase">
    <location>
        <begin position="1"/>
        <end position="381"/>
    </location>
</feature>
<feature type="domain" description="THUMP" evidence="1">
    <location>
        <begin position="60"/>
        <end position="168"/>
    </location>
</feature>
<feature type="binding site" evidence="1">
    <location>
        <begin position="186"/>
        <end position="187"/>
    </location>
    <ligand>
        <name>ATP</name>
        <dbReference type="ChEBI" id="CHEBI:30616"/>
    </ligand>
</feature>
<feature type="binding site" evidence="1">
    <location>
        <position position="269"/>
    </location>
    <ligand>
        <name>ATP</name>
        <dbReference type="ChEBI" id="CHEBI:30616"/>
    </ligand>
</feature>
<feature type="binding site" evidence="1">
    <location>
        <position position="291"/>
    </location>
    <ligand>
        <name>ATP</name>
        <dbReference type="ChEBI" id="CHEBI:30616"/>
    </ligand>
</feature>
<feature type="binding site" evidence="1">
    <location>
        <position position="300"/>
    </location>
    <ligand>
        <name>ATP</name>
        <dbReference type="ChEBI" id="CHEBI:30616"/>
    </ligand>
</feature>
<organism>
    <name type="scientific">Thermococcus kodakarensis (strain ATCC BAA-918 / JCM 12380 / KOD1)</name>
    <name type="common">Pyrococcus kodakaraensis (strain KOD1)</name>
    <dbReference type="NCBI Taxonomy" id="69014"/>
    <lineage>
        <taxon>Archaea</taxon>
        <taxon>Methanobacteriati</taxon>
        <taxon>Methanobacteriota</taxon>
        <taxon>Thermococci</taxon>
        <taxon>Thermococcales</taxon>
        <taxon>Thermococcaceae</taxon>
        <taxon>Thermococcus</taxon>
    </lineage>
</organism>